<comment type="function">
    <text evidence="2">Light-harvesting photosynthetic tetrapyrrole chromophore-protein from the phycobiliprotein complex.</text>
</comment>
<comment type="subunit">
    <text evidence="1">Heterotetramer of 2 different alpha chains and 2 identical beta chains which form 2 alpha-beta heterodimers within the heterotetramer.</text>
</comment>
<comment type="subcellular location">
    <subcellularLocation>
        <location evidence="2">Plastid</location>
        <location evidence="2">Chloroplast thylakoid membrane</location>
        <topology evidence="2">Peripheral membrane protein</topology>
        <orientation evidence="2">Lumenal side</orientation>
    </subcellularLocation>
</comment>
<comment type="PTM">
    <text evidence="1">Contains one phycocyanobilin chromophore and one mesobiliverdin chromophore with binding mediated by both the alpha and beta subunits.</text>
</comment>
<comment type="miscellaneous">
    <text evidence="2">The light-harvesting system in Cryptophytes contains phycobiliprotein complexes. Unusually they are composed of either phycoerythrin (CPE) or phycocyanin (CPC) but never allophycocyanin (APC), with only one type of biliprotein being present in any one species. Unlike cyanobacteria or red algae these proteins are not arranged into higher-order phycobilisome complexes, and they are found in the thylakoid lumen.</text>
</comment>
<comment type="similarity">
    <text evidence="2">Belongs to the phycoerythrin family.</text>
</comment>
<proteinExistence type="evidence at transcript level"/>
<geneLocation type="chloroplast" evidence="3"/>
<organism>
    <name type="scientific">Chroomonas sp. (strain CCMP270)</name>
    <dbReference type="NCBI Taxonomy" id="354589"/>
    <lineage>
        <taxon>Eukaryota</taxon>
        <taxon>Cryptophyceae</taxon>
        <taxon>Pyrenomonadales</taxon>
        <taxon>Chroomonadaceae</taxon>
        <taxon>Chroomonas</taxon>
    </lineage>
</organism>
<keyword id="KW-0089">Bile pigment</keyword>
<keyword id="KW-0150">Chloroplast</keyword>
<keyword id="KW-0157">Chromophore</keyword>
<keyword id="KW-0249">Electron transport</keyword>
<keyword id="KW-0472">Membrane</keyword>
<keyword id="KW-0602">Photosynthesis</keyword>
<keyword id="KW-0934">Plastid</keyword>
<keyword id="KW-0793">Thylakoid</keyword>
<keyword id="KW-0813">Transport</keyword>
<reference evidence="3" key="1">
    <citation type="journal article" date="2014" name="Proc. Natl. Acad. Sci. U.S.A.">
        <title>Single-residue insertion switches the quaternary structure and exciton states of cryptophyte light-harvesting proteins.</title>
        <authorList>
            <person name="Harrop S.J."/>
            <person name="Wilk K.E."/>
            <person name="Dinshaw R."/>
            <person name="Collini E."/>
            <person name="Mirkovic T."/>
            <person name="Teng C.Y."/>
            <person name="Oblinsky D.G."/>
            <person name="Green B.R."/>
            <person name="Hoef-Emden K."/>
            <person name="Hiller R.G."/>
            <person name="Scholes G.D."/>
            <person name="Curmi P.M."/>
        </authorList>
    </citation>
    <scope>NUCLEOTIDE SEQUENCE [MRNA]</scope>
</reference>
<sequence>MIAKTAVALALVASAVALRPTMSLSANRREVVAGAGAAAVVAPMLRPAEANAVYTRGTSLSAPVITIFDARGCTDHANKEYKGDWSGRAEDDECCVKIQMQKISVAEDVARLVRLECLNELKSK</sequence>
<name>PHEA3_CHRS2</name>
<protein>
    <recommendedName>
        <fullName evidence="2">Phycocyanin PC645 alpha-3 subunit</fullName>
    </recommendedName>
</protein>
<dbReference type="EMBL" id="KF314691">
    <property type="protein sequence ID" value="AGY96988.1"/>
    <property type="molecule type" value="mRNA"/>
</dbReference>
<dbReference type="SMR" id="U5TBU0"/>
<dbReference type="GO" id="GO:0009535">
    <property type="term" value="C:chloroplast thylakoid membrane"/>
    <property type="evidence" value="ECO:0007669"/>
    <property type="project" value="UniProtKB-SubCell"/>
</dbReference>
<dbReference type="GO" id="GO:0030089">
    <property type="term" value="C:phycobilisome"/>
    <property type="evidence" value="ECO:0007669"/>
    <property type="project" value="InterPro"/>
</dbReference>
<dbReference type="GO" id="GO:0015979">
    <property type="term" value="P:photosynthesis"/>
    <property type="evidence" value="ECO:0007669"/>
    <property type="project" value="UniProtKB-KW"/>
</dbReference>
<dbReference type="Gene3D" id="3.90.510.10">
    <property type="entry name" value="Phycoerythrin alpha chain"/>
    <property type="match status" value="1"/>
</dbReference>
<dbReference type="InterPro" id="IPR011070">
    <property type="entry name" value="Globular_prot_asu/bsu"/>
</dbReference>
<dbReference type="InterPro" id="IPR037011">
    <property type="entry name" value="Phycoerythr-like_a_sf"/>
</dbReference>
<dbReference type="InterPro" id="IPR004228">
    <property type="entry name" value="Phycoerythr_a"/>
</dbReference>
<dbReference type="Pfam" id="PF02972">
    <property type="entry name" value="Phycoerythr_ab"/>
    <property type="match status" value="1"/>
</dbReference>
<dbReference type="SUPFAM" id="SSF56568">
    <property type="entry name" value="Non-globular alpha+beta subunits of globular proteins"/>
    <property type="match status" value="1"/>
</dbReference>
<evidence type="ECO:0000250" key="1">
    <source>
        <dbReference type="UniProtKB" id="U5T880"/>
    </source>
</evidence>
<evidence type="ECO:0000305" key="2"/>
<evidence type="ECO:0000312" key="3">
    <source>
        <dbReference type="EMBL" id="AGY96988.1"/>
    </source>
</evidence>
<feature type="chain" id="PRO_5004664653" description="Phycocyanin PC645 alpha-3 subunit">
    <location>
        <begin position="1"/>
        <end position="124"/>
    </location>
</feature>
<feature type="binding site" evidence="1">
    <location>
        <position position="71"/>
    </location>
    <ligand>
        <name>(2R,3E)-phycocyanobilin</name>
        <dbReference type="ChEBI" id="CHEBI:85275"/>
        <note>ligand shared with beta subunit</note>
    </ligand>
</feature>
<feature type="binding site" description="covalent" evidence="1">
    <location>
        <position position="73"/>
    </location>
    <ligand>
        <name>mesobiliverdin</name>
        <dbReference type="ChEBI" id="CHEBI:189061"/>
        <note>ligand shared with beta subunit</note>
    </ligand>
</feature>
<feature type="binding site" evidence="1">
    <location>
        <position position="81"/>
    </location>
    <ligand>
        <name>mesobiliverdin</name>
        <dbReference type="ChEBI" id="CHEBI:189061"/>
        <note>ligand shared with beta subunit</note>
    </ligand>
</feature>
<feature type="binding site" evidence="1">
    <location>
        <position position="97"/>
    </location>
    <ligand>
        <name>mesobiliverdin</name>
        <dbReference type="ChEBI" id="CHEBI:189061"/>
        <note>ligand shared with beta subunit</note>
    </ligand>
</feature>
<accession>U5TBU0</accession>